<feature type="chain" id="PRO_0000275907" description="NAD(P)H-quinone oxidoreductase chain 4, chloroplastic">
    <location>
        <begin position="1"/>
        <end position="501"/>
    </location>
</feature>
<feature type="transmembrane region" description="Helical" evidence="1">
    <location>
        <begin position="5"/>
        <end position="25"/>
    </location>
</feature>
<feature type="transmembrane region" description="Helical" evidence="1">
    <location>
        <begin position="38"/>
        <end position="58"/>
    </location>
</feature>
<feature type="transmembrane region" description="Helical" evidence="1">
    <location>
        <begin position="85"/>
        <end position="105"/>
    </location>
</feature>
<feature type="transmembrane region" description="Helical" evidence="1">
    <location>
        <begin position="112"/>
        <end position="130"/>
    </location>
</feature>
<feature type="transmembrane region" description="Helical" evidence="1">
    <location>
        <begin position="135"/>
        <end position="155"/>
    </location>
</feature>
<feature type="transmembrane region" description="Helical" evidence="1">
    <location>
        <begin position="168"/>
        <end position="188"/>
    </location>
</feature>
<feature type="transmembrane region" description="Helical" evidence="1">
    <location>
        <begin position="209"/>
        <end position="229"/>
    </location>
</feature>
<feature type="transmembrane region" description="Helical" evidence="1">
    <location>
        <begin position="243"/>
        <end position="263"/>
    </location>
</feature>
<feature type="transmembrane region" description="Helical" evidence="1">
    <location>
        <begin position="275"/>
        <end position="295"/>
    </location>
</feature>
<feature type="transmembrane region" description="Helical" evidence="1">
    <location>
        <begin position="306"/>
        <end position="326"/>
    </location>
</feature>
<feature type="transmembrane region" description="Helical" evidence="1">
    <location>
        <begin position="331"/>
        <end position="351"/>
    </location>
</feature>
<feature type="transmembrane region" description="Helical" evidence="1">
    <location>
        <begin position="387"/>
        <end position="407"/>
    </location>
</feature>
<feature type="transmembrane region" description="Helical" evidence="1">
    <location>
        <begin position="417"/>
        <end position="437"/>
    </location>
</feature>
<feature type="transmembrane region" description="Helical" evidence="1">
    <location>
        <begin position="463"/>
        <end position="483"/>
    </location>
</feature>
<comment type="catalytic activity">
    <reaction evidence="1">
        <text>a plastoquinone + NADH + (n+1) H(+)(in) = a plastoquinol + NAD(+) + n H(+)(out)</text>
        <dbReference type="Rhea" id="RHEA:42608"/>
        <dbReference type="Rhea" id="RHEA-COMP:9561"/>
        <dbReference type="Rhea" id="RHEA-COMP:9562"/>
        <dbReference type="ChEBI" id="CHEBI:15378"/>
        <dbReference type="ChEBI" id="CHEBI:17757"/>
        <dbReference type="ChEBI" id="CHEBI:57540"/>
        <dbReference type="ChEBI" id="CHEBI:57945"/>
        <dbReference type="ChEBI" id="CHEBI:62192"/>
    </reaction>
</comment>
<comment type="catalytic activity">
    <reaction evidence="1">
        <text>a plastoquinone + NADPH + (n+1) H(+)(in) = a plastoquinol + NADP(+) + n H(+)(out)</text>
        <dbReference type="Rhea" id="RHEA:42612"/>
        <dbReference type="Rhea" id="RHEA-COMP:9561"/>
        <dbReference type="Rhea" id="RHEA-COMP:9562"/>
        <dbReference type="ChEBI" id="CHEBI:15378"/>
        <dbReference type="ChEBI" id="CHEBI:17757"/>
        <dbReference type="ChEBI" id="CHEBI:57783"/>
        <dbReference type="ChEBI" id="CHEBI:58349"/>
        <dbReference type="ChEBI" id="CHEBI:62192"/>
    </reaction>
</comment>
<comment type="subcellular location">
    <subcellularLocation>
        <location evidence="1">Plastid</location>
        <location evidence="1">Chloroplast thylakoid membrane</location>
        <topology evidence="1">Multi-pass membrane protein</topology>
    </subcellularLocation>
</comment>
<comment type="similarity">
    <text evidence="1">Belongs to the complex I subunit 4 family.</text>
</comment>
<dbReference type="EC" id="7.1.1.-" evidence="1"/>
<dbReference type="EMBL" id="AY780259">
    <property type="protein sequence ID" value="AAX21078.1"/>
    <property type="molecule type" value="Genomic_DNA"/>
</dbReference>
<dbReference type="RefSeq" id="YP_636349.2">
    <property type="nucleotide sequence ID" value="NC_008115.1"/>
</dbReference>
<dbReference type="SMR" id="Q49KU8"/>
<dbReference type="GeneID" id="4108381"/>
<dbReference type="GO" id="GO:0009535">
    <property type="term" value="C:chloroplast thylakoid membrane"/>
    <property type="evidence" value="ECO:0007669"/>
    <property type="project" value="UniProtKB-SubCell"/>
</dbReference>
<dbReference type="GO" id="GO:0008137">
    <property type="term" value="F:NADH dehydrogenase (ubiquinone) activity"/>
    <property type="evidence" value="ECO:0007669"/>
    <property type="project" value="InterPro"/>
</dbReference>
<dbReference type="GO" id="GO:0048039">
    <property type="term" value="F:ubiquinone binding"/>
    <property type="evidence" value="ECO:0007669"/>
    <property type="project" value="TreeGrafter"/>
</dbReference>
<dbReference type="GO" id="GO:0042773">
    <property type="term" value="P:ATP synthesis coupled electron transport"/>
    <property type="evidence" value="ECO:0007669"/>
    <property type="project" value="InterPro"/>
</dbReference>
<dbReference type="GO" id="GO:0015990">
    <property type="term" value="P:electron transport coupled proton transport"/>
    <property type="evidence" value="ECO:0007669"/>
    <property type="project" value="TreeGrafter"/>
</dbReference>
<dbReference type="HAMAP" id="MF_00491">
    <property type="entry name" value="NDH1_NuoM"/>
    <property type="match status" value="1"/>
</dbReference>
<dbReference type="InterPro" id="IPR022997">
    <property type="entry name" value="NADH_Q_OxRdtase_chain4"/>
</dbReference>
<dbReference type="InterPro" id="IPR010227">
    <property type="entry name" value="NADH_Q_OxRdtase_chainM/4"/>
</dbReference>
<dbReference type="InterPro" id="IPR003918">
    <property type="entry name" value="NADH_UbQ_OxRdtase"/>
</dbReference>
<dbReference type="InterPro" id="IPR001750">
    <property type="entry name" value="ND/Mrp_TM"/>
</dbReference>
<dbReference type="NCBIfam" id="TIGR01972">
    <property type="entry name" value="NDH_I_M"/>
    <property type="match status" value="1"/>
</dbReference>
<dbReference type="PANTHER" id="PTHR43507:SF21">
    <property type="entry name" value="NAD(P)H-QUINONE OXIDOREDUCTASE CHAIN 4, CHLOROPLASTIC"/>
    <property type="match status" value="1"/>
</dbReference>
<dbReference type="PANTHER" id="PTHR43507">
    <property type="entry name" value="NADH-UBIQUINONE OXIDOREDUCTASE CHAIN 4"/>
    <property type="match status" value="1"/>
</dbReference>
<dbReference type="Pfam" id="PF00361">
    <property type="entry name" value="Proton_antipo_M"/>
    <property type="match status" value="1"/>
</dbReference>
<dbReference type="PRINTS" id="PR01437">
    <property type="entry name" value="NUOXDRDTASE4"/>
</dbReference>
<organism>
    <name type="scientific">Eucalyptus globulus subsp. globulus</name>
    <name type="common">Tasmanian blue gum</name>
    <dbReference type="NCBI Taxonomy" id="71271"/>
    <lineage>
        <taxon>Eukaryota</taxon>
        <taxon>Viridiplantae</taxon>
        <taxon>Streptophyta</taxon>
        <taxon>Embryophyta</taxon>
        <taxon>Tracheophyta</taxon>
        <taxon>Spermatophyta</taxon>
        <taxon>Magnoliopsida</taxon>
        <taxon>eudicotyledons</taxon>
        <taxon>Gunneridae</taxon>
        <taxon>Pentapetalae</taxon>
        <taxon>rosids</taxon>
        <taxon>malvids</taxon>
        <taxon>Myrtales</taxon>
        <taxon>Myrtaceae</taxon>
        <taxon>Myrtoideae</taxon>
        <taxon>Eucalypteae</taxon>
        <taxon>Eucalyptus</taxon>
    </lineage>
</organism>
<gene>
    <name evidence="1" type="primary">ndhD</name>
</gene>
<sequence length="501" mass="56349">MTNYFPWLTIIVLLPIFAGSLIFFLPHRGNKVIRWYTICICSLELLLTTYTFCYHFQLNDPLTQLTEDYKWINFFDFYWRLGIDGLSIGPILLTGFITTLATLAARPVTRDSRLFHFLMLAMYSGQIGSFSSRDLLLFFIMWELELIPVYLLLAMWGGKKRLYSATKFILYTAGGSIFLLIGVLGIGLYGSNEPTLNLETLSNQSYPVALEIILYIGFLIAFSVKLPIIPLHTWLPDTHGEAHYSTCMLLAGILLKMGAYGLVRINMELLPHAHSIFSPWLIIVGAIQIIYAALTSPGQRNLKKRIAYSSVSHMGFIIIGIGSITDTGLNGAILQIISHGFIGAALFFLAGTSYDRIRLVYLDEMGGMAIHLPKIFTIFSILSMASLALPGMSGFLAELIVFFGIITSHQYLLMPKILITFVMAIGMILTPIYLLSMLRQMFYGYKLFNVPNSYFLDFGPRELFVSISILLPIIAIGIYPDFVLSLSVDKVEAIISNYFYQ</sequence>
<accession>Q49KU8</accession>
<evidence type="ECO:0000255" key="1">
    <source>
        <dbReference type="HAMAP-Rule" id="MF_00491"/>
    </source>
</evidence>
<protein>
    <recommendedName>
        <fullName evidence="1">NAD(P)H-quinone oxidoreductase chain 4, chloroplastic</fullName>
        <ecNumber evidence="1">7.1.1.-</ecNumber>
    </recommendedName>
    <alternativeName>
        <fullName evidence="1">NAD(P)H dehydrogenase, chain 4</fullName>
    </alternativeName>
    <alternativeName>
        <fullName evidence="1">NADH-plastoquinone oxidoreductase chain 4</fullName>
    </alternativeName>
</protein>
<proteinExistence type="inferred from homology"/>
<reference key="1">
    <citation type="journal article" date="2005" name="DNA Res.">
        <title>Complete nucleotide sequence of the chloroplast genome from the Tasmanian blue gum, Eucalyptus globulus (Myrtaceae).</title>
        <authorList>
            <person name="Steane D.A."/>
        </authorList>
    </citation>
    <scope>NUCLEOTIDE SEQUENCE [LARGE SCALE GENOMIC DNA]</scope>
</reference>
<keyword id="KW-0150">Chloroplast</keyword>
<keyword id="KW-0472">Membrane</keyword>
<keyword id="KW-0520">NAD</keyword>
<keyword id="KW-0521">NADP</keyword>
<keyword id="KW-0934">Plastid</keyword>
<keyword id="KW-0618">Plastoquinone</keyword>
<keyword id="KW-0874">Quinone</keyword>
<keyword id="KW-0793">Thylakoid</keyword>
<keyword id="KW-1278">Translocase</keyword>
<keyword id="KW-0812">Transmembrane</keyword>
<keyword id="KW-1133">Transmembrane helix</keyword>
<name>NU4C_EUCGG</name>
<geneLocation type="chloroplast"/>